<organism>
    <name type="scientific">Erythrobacter litoralis (strain HTCC2594)</name>
    <dbReference type="NCBI Taxonomy" id="314225"/>
    <lineage>
        <taxon>Bacteria</taxon>
        <taxon>Pseudomonadati</taxon>
        <taxon>Pseudomonadota</taxon>
        <taxon>Alphaproteobacteria</taxon>
        <taxon>Sphingomonadales</taxon>
        <taxon>Erythrobacteraceae</taxon>
        <taxon>Erythrobacter/Porphyrobacter group</taxon>
        <taxon>Erythrobacter</taxon>
    </lineage>
</organism>
<keyword id="KW-0963">Cytoplasm</keyword>
<keyword id="KW-0444">Lipid biosynthesis</keyword>
<keyword id="KW-0443">Lipid metabolism</keyword>
<keyword id="KW-0594">Phospholipid biosynthesis</keyword>
<keyword id="KW-1208">Phospholipid metabolism</keyword>
<keyword id="KW-1185">Reference proteome</keyword>
<keyword id="KW-0808">Transferase</keyword>
<gene>
    <name evidence="1" type="primary">plsX</name>
    <name type="ordered locus">ELI_08625</name>
</gene>
<evidence type="ECO:0000255" key="1">
    <source>
        <dbReference type="HAMAP-Rule" id="MF_00019"/>
    </source>
</evidence>
<reference key="1">
    <citation type="journal article" date="2009" name="J. Bacteriol.">
        <title>Complete genome sequence of Erythrobacter litoralis HTCC2594.</title>
        <authorList>
            <person name="Oh H.M."/>
            <person name="Giovannoni S.J."/>
            <person name="Ferriera S."/>
            <person name="Johnson J."/>
            <person name="Cho J.C."/>
        </authorList>
    </citation>
    <scope>NUCLEOTIDE SEQUENCE [LARGE SCALE GENOMIC DNA]</scope>
    <source>
        <strain>HTCC2594</strain>
    </source>
</reference>
<dbReference type="EC" id="2.3.1.274" evidence="1"/>
<dbReference type="EMBL" id="CP000157">
    <property type="protein sequence ID" value="ABC63817.1"/>
    <property type="molecule type" value="Genomic_DNA"/>
</dbReference>
<dbReference type="RefSeq" id="WP_011414647.1">
    <property type="nucleotide sequence ID" value="NC_007722.1"/>
</dbReference>
<dbReference type="SMR" id="Q2N924"/>
<dbReference type="STRING" id="314225.ELI_08625"/>
<dbReference type="KEGG" id="eli:ELI_08625"/>
<dbReference type="eggNOG" id="COG0416">
    <property type="taxonomic scope" value="Bacteria"/>
</dbReference>
<dbReference type="HOGENOM" id="CLU_039379_1_0_5"/>
<dbReference type="OrthoDB" id="9806408at2"/>
<dbReference type="UniPathway" id="UPA00085"/>
<dbReference type="Proteomes" id="UP000008808">
    <property type="component" value="Chromosome"/>
</dbReference>
<dbReference type="GO" id="GO:0005737">
    <property type="term" value="C:cytoplasm"/>
    <property type="evidence" value="ECO:0007669"/>
    <property type="project" value="UniProtKB-SubCell"/>
</dbReference>
<dbReference type="GO" id="GO:0043811">
    <property type="term" value="F:phosphate:acyl-[acyl carrier protein] acyltransferase activity"/>
    <property type="evidence" value="ECO:0007669"/>
    <property type="project" value="UniProtKB-UniRule"/>
</dbReference>
<dbReference type="GO" id="GO:0006633">
    <property type="term" value="P:fatty acid biosynthetic process"/>
    <property type="evidence" value="ECO:0007669"/>
    <property type="project" value="UniProtKB-UniRule"/>
</dbReference>
<dbReference type="GO" id="GO:0008654">
    <property type="term" value="P:phospholipid biosynthetic process"/>
    <property type="evidence" value="ECO:0007669"/>
    <property type="project" value="UniProtKB-KW"/>
</dbReference>
<dbReference type="Gene3D" id="3.40.718.10">
    <property type="entry name" value="Isopropylmalate Dehydrogenase"/>
    <property type="match status" value="1"/>
</dbReference>
<dbReference type="HAMAP" id="MF_00019">
    <property type="entry name" value="PlsX"/>
    <property type="match status" value="1"/>
</dbReference>
<dbReference type="InterPro" id="IPR003664">
    <property type="entry name" value="FA_synthesis"/>
</dbReference>
<dbReference type="InterPro" id="IPR012281">
    <property type="entry name" value="Phospholipid_synth_PlsX-like"/>
</dbReference>
<dbReference type="NCBIfam" id="TIGR00182">
    <property type="entry name" value="plsX"/>
    <property type="match status" value="1"/>
</dbReference>
<dbReference type="PANTHER" id="PTHR30100">
    <property type="entry name" value="FATTY ACID/PHOSPHOLIPID SYNTHESIS PROTEIN PLSX"/>
    <property type="match status" value="1"/>
</dbReference>
<dbReference type="PANTHER" id="PTHR30100:SF1">
    <property type="entry name" value="PHOSPHATE ACYLTRANSFERASE"/>
    <property type="match status" value="1"/>
</dbReference>
<dbReference type="Pfam" id="PF02504">
    <property type="entry name" value="FA_synthesis"/>
    <property type="match status" value="1"/>
</dbReference>
<dbReference type="PIRSF" id="PIRSF002465">
    <property type="entry name" value="Phsphlp_syn_PlsX"/>
    <property type="match status" value="1"/>
</dbReference>
<dbReference type="SUPFAM" id="SSF53659">
    <property type="entry name" value="Isocitrate/Isopropylmalate dehydrogenase-like"/>
    <property type="match status" value="1"/>
</dbReference>
<name>PLSX_ERYLH</name>
<proteinExistence type="inferred from homology"/>
<accession>Q2N924</accession>
<sequence length="355" mass="37297">MSLPRIALDAMGGDVGVRVMIDGAAEARRRHDRFKFLLVGDETRIKAALDTHPNMRGASEILHCEDVVGGDEKPTQALRRAKTTSMGLTVNAVKQGEAGAAVSAGNTGALMAMSKLALRTMPGIDRPALAGVMPTLEEDDVVMLDLGANTEADARNLVQFAIMGAAYSRILTGREEPRVRLLNIGTEEIKGTDALRDAAAQLQDAAGLAMQFDGFVESDKINRGQVDVVVTDGFSGNIALKAIEGAARFVTDLLRNAFTSSIRSKVGFLVSRPATELLKHHLDPNNHNGAVFLGLNGVVVKSHGSANSVGVANAVAVAASLLENDLTARIASDLAELGERMWDATGGNGNGPAPK</sequence>
<feature type="chain" id="PRO_0000329227" description="Phosphate acyltransferase">
    <location>
        <begin position="1"/>
        <end position="355"/>
    </location>
</feature>
<comment type="function">
    <text evidence="1">Catalyzes the reversible formation of acyl-phosphate (acyl-PO(4)) from acyl-[acyl-carrier-protein] (acyl-ACP). This enzyme utilizes acyl-ACP as fatty acyl donor, but not acyl-CoA.</text>
</comment>
<comment type="catalytic activity">
    <reaction evidence="1">
        <text>a fatty acyl-[ACP] + phosphate = an acyl phosphate + holo-[ACP]</text>
        <dbReference type="Rhea" id="RHEA:42292"/>
        <dbReference type="Rhea" id="RHEA-COMP:9685"/>
        <dbReference type="Rhea" id="RHEA-COMP:14125"/>
        <dbReference type="ChEBI" id="CHEBI:43474"/>
        <dbReference type="ChEBI" id="CHEBI:59918"/>
        <dbReference type="ChEBI" id="CHEBI:64479"/>
        <dbReference type="ChEBI" id="CHEBI:138651"/>
        <dbReference type="EC" id="2.3.1.274"/>
    </reaction>
</comment>
<comment type="pathway">
    <text evidence="1">Lipid metabolism; phospholipid metabolism.</text>
</comment>
<comment type="subunit">
    <text evidence="1">Homodimer. Probably interacts with PlsY.</text>
</comment>
<comment type="subcellular location">
    <subcellularLocation>
        <location evidence="1">Cytoplasm</location>
    </subcellularLocation>
    <text evidence="1">Associated with the membrane possibly through PlsY.</text>
</comment>
<comment type="similarity">
    <text evidence="1">Belongs to the PlsX family.</text>
</comment>
<protein>
    <recommendedName>
        <fullName evidence="1">Phosphate acyltransferase</fullName>
        <ecNumber evidence="1">2.3.1.274</ecNumber>
    </recommendedName>
    <alternativeName>
        <fullName evidence="1">Acyl-ACP phosphotransacylase</fullName>
    </alternativeName>
    <alternativeName>
        <fullName evidence="1">Acyl-[acyl-carrier-protein]--phosphate acyltransferase</fullName>
    </alternativeName>
    <alternativeName>
        <fullName evidence="1">Phosphate-acyl-ACP acyltransferase</fullName>
    </alternativeName>
</protein>